<comment type="function">
    <text evidence="1">Condenses 4-methyl-5-(beta-hydroxyethyl)thiazole monophosphate (THZ-P) and 2-methyl-4-amino-5-hydroxymethyl pyrimidine pyrophosphate (HMP-PP) to form thiamine monophosphate (TMP).</text>
</comment>
<comment type="catalytic activity">
    <reaction evidence="1">
        <text>2-[(2R,5Z)-2-carboxy-4-methylthiazol-5(2H)-ylidene]ethyl phosphate + 4-amino-2-methyl-5-(diphosphooxymethyl)pyrimidine + 2 H(+) = thiamine phosphate + CO2 + diphosphate</text>
        <dbReference type="Rhea" id="RHEA:47844"/>
        <dbReference type="ChEBI" id="CHEBI:15378"/>
        <dbReference type="ChEBI" id="CHEBI:16526"/>
        <dbReference type="ChEBI" id="CHEBI:33019"/>
        <dbReference type="ChEBI" id="CHEBI:37575"/>
        <dbReference type="ChEBI" id="CHEBI:57841"/>
        <dbReference type="ChEBI" id="CHEBI:62899"/>
        <dbReference type="EC" id="2.5.1.3"/>
    </reaction>
</comment>
<comment type="catalytic activity">
    <reaction evidence="1">
        <text>2-(2-carboxy-4-methylthiazol-5-yl)ethyl phosphate + 4-amino-2-methyl-5-(diphosphooxymethyl)pyrimidine + 2 H(+) = thiamine phosphate + CO2 + diphosphate</text>
        <dbReference type="Rhea" id="RHEA:47848"/>
        <dbReference type="ChEBI" id="CHEBI:15378"/>
        <dbReference type="ChEBI" id="CHEBI:16526"/>
        <dbReference type="ChEBI" id="CHEBI:33019"/>
        <dbReference type="ChEBI" id="CHEBI:37575"/>
        <dbReference type="ChEBI" id="CHEBI:57841"/>
        <dbReference type="ChEBI" id="CHEBI:62890"/>
        <dbReference type="EC" id="2.5.1.3"/>
    </reaction>
</comment>
<comment type="catalytic activity">
    <reaction evidence="1">
        <text>4-methyl-5-(2-phosphooxyethyl)-thiazole + 4-amino-2-methyl-5-(diphosphooxymethyl)pyrimidine + H(+) = thiamine phosphate + diphosphate</text>
        <dbReference type="Rhea" id="RHEA:22328"/>
        <dbReference type="ChEBI" id="CHEBI:15378"/>
        <dbReference type="ChEBI" id="CHEBI:33019"/>
        <dbReference type="ChEBI" id="CHEBI:37575"/>
        <dbReference type="ChEBI" id="CHEBI:57841"/>
        <dbReference type="ChEBI" id="CHEBI:58296"/>
        <dbReference type="EC" id="2.5.1.3"/>
    </reaction>
</comment>
<comment type="cofactor">
    <cofactor evidence="1">
        <name>Mg(2+)</name>
        <dbReference type="ChEBI" id="CHEBI:18420"/>
    </cofactor>
    <text evidence="1">Binds 1 Mg(2+) ion per subunit.</text>
</comment>
<comment type="pathway">
    <text evidence="1">Cofactor biosynthesis; thiamine diphosphate biosynthesis; thiamine phosphate from 4-amino-2-methyl-5-diphosphomethylpyrimidine and 4-methyl-5-(2-phosphoethyl)-thiazole: step 1/1.</text>
</comment>
<comment type="similarity">
    <text evidence="1">Belongs to the thiamine-phosphate synthase family.</text>
</comment>
<dbReference type="EC" id="2.5.1.3" evidence="1"/>
<dbReference type="EMBL" id="AE005674">
    <property type="protein sequence ID" value="AAN45494.2"/>
    <property type="molecule type" value="Genomic_DNA"/>
</dbReference>
<dbReference type="EMBL" id="AE014073">
    <property type="protein sequence ID" value="AAP18707.1"/>
    <property type="molecule type" value="Genomic_DNA"/>
</dbReference>
<dbReference type="RefSeq" id="NP_709787.2">
    <property type="nucleotide sequence ID" value="NC_004337.2"/>
</dbReference>
<dbReference type="RefSeq" id="WP_000284600.1">
    <property type="nucleotide sequence ID" value="NZ_WPGW01000040.1"/>
</dbReference>
<dbReference type="SMR" id="Q83PB9"/>
<dbReference type="STRING" id="198214.SF4065"/>
<dbReference type="PaxDb" id="198214-SF4065"/>
<dbReference type="GeneID" id="1027414"/>
<dbReference type="KEGG" id="sfl:SF4065"/>
<dbReference type="KEGG" id="sfx:S3670"/>
<dbReference type="PATRIC" id="fig|198214.7.peg.4789"/>
<dbReference type="HOGENOM" id="CLU_018272_3_3_6"/>
<dbReference type="UniPathway" id="UPA00060">
    <property type="reaction ID" value="UER00141"/>
</dbReference>
<dbReference type="Proteomes" id="UP000001006">
    <property type="component" value="Chromosome"/>
</dbReference>
<dbReference type="Proteomes" id="UP000002673">
    <property type="component" value="Chromosome"/>
</dbReference>
<dbReference type="GO" id="GO:0005737">
    <property type="term" value="C:cytoplasm"/>
    <property type="evidence" value="ECO:0007669"/>
    <property type="project" value="TreeGrafter"/>
</dbReference>
<dbReference type="GO" id="GO:0000287">
    <property type="term" value="F:magnesium ion binding"/>
    <property type="evidence" value="ECO:0007669"/>
    <property type="project" value="UniProtKB-UniRule"/>
</dbReference>
<dbReference type="GO" id="GO:0004789">
    <property type="term" value="F:thiamine-phosphate diphosphorylase activity"/>
    <property type="evidence" value="ECO:0007669"/>
    <property type="project" value="UniProtKB-UniRule"/>
</dbReference>
<dbReference type="GO" id="GO:0009228">
    <property type="term" value="P:thiamine biosynthetic process"/>
    <property type="evidence" value="ECO:0007669"/>
    <property type="project" value="UniProtKB-KW"/>
</dbReference>
<dbReference type="GO" id="GO:0009229">
    <property type="term" value="P:thiamine diphosphate biosynthetic process"/>
    <property type="evidence" value="ECO:0007669"/>
    <property type="project" value="UniProtKB-UniRule"/>
</dbReference>
<dbReference type="CDD" id="cd00564">
    <property type="entry name" value="TMP_TenI"/>
    <property type="match status" value="1"/>
</dbReference>
<dbReference type="FunFam" id="3.20.20.70:FF:000064">
    <property type="entry name" value="Thiamine-phosphate synthase"/>
    <property type="match status" value="1"/>
</dbReference>
<dbReference type="Gene3D" id="3.20.20.70">
    <property type="entry name" value="Aldolase class I"/>
    <property type="match status" value="1"/>
</dbReference>
<dbReference type="HAMAP" id="MF_00097">
    <property type="entry name" value="TMP_synthase"/>
    <property type="match status" value="1"/>
</dbReference>
<dbReference type="InterPro" id="IPR013785">
    <property type="entry name" value="Aldolase_TIM"/>
</dbReference>
<dbReference type="InterPro" id="IPR036206">
    <property type="entry name" value="ThiamineP_synth_sf"/>
</dbReference>
<dbReference type="InterPro" id="IPR022998">
    <property type="entry name" value="ThiamineP_synth_TenI"/>
</dbReference>
<dbReference type="InterPro" id="IPR034291">
    <property type="entry name" value="TMP_synthase"/>
</dbReference>
<dbReference type="NCBIfam" id="NF002904">
    <property type="entry name" value="PRK03512.1"/>
    <property type="match status" value="1"/>
</dbReference>
<dbReference type="NCBIfam" id="TIGR00693">
    <property type="entry name" value="thiE"/>
    <property type="match status" value="1"/>
</dbReference>
<dbReference type="PANTHER" id="PTHR20857">
    <property type="entry name" value="THIAMINE-PHOSPHATE PYROPHOSPHORYLASE"/>
    <property type="match status" value="1"/>
</dbReference>
<dbReference type="PANTHER" id="PTHR20857:SF15">
    <property type="entry name" value="THIAMINE-PHOSPHATE SYNTHASE"/>
    <property type="match status" value="1"/>
</dbReference>
<dbReference type="Pfam" id="PF02581">
    <property type="entry name" value="TMP-TENI"/>
    <property type="match status" value="1"/>
</dbReference>
<dbReference type="SUPFAM" id="SSF51391">
    <property type="entry name" value="Thiamin phosphate synthase"/>
    <property type="match status" value="1"/>
</dbReference>
<keyword id="KW-0460">Magnesium</keyword>
<keyword id="KW-0479">Metal-binding</keyword>
<keyword id="KW-1185">Reference proteome</keyword>
<keyword id="KW-0784">Thiamine biosynthesis</keyword>
<keyword id="KW-0808">Transferase</keyword>
<reference key="1">
    <citation type="journal article" date="2002" name="Nucleic Acids Res.">
        <title>Genome sequence of Shigella flexneri 2a: insights into pathogenicity through comparison with genomes of Escherichia coli K12 and O157.</title>
        <authorList>
            <person name="Jin Q."/>
            <person name="Yuan Z."/>
            <person name="Xu J."/>
            <person name="Wang Y."/>
            <person name="Shen Y."/>
            <person name="Lu W."/>
            <person name="Wang J."/>
            <person name="Liu H."/>
            <person name="Yang J."/>
            <person name="Yang F."/>
            <person name="Zhang X."/>
            <person name="Zhang J."/>
            <person name="Yang G."/>
            <person name="Wu H."/>
            <person name="Qu D."/>
            <person name="Dong J."/>
            <person name="Sun L."/>
            <person name="Xue Y."/>
            <person name="Zhao A."/>
            <person name="Gao Y."/>
            <person name="Zhu J."/>
            <person name="Kan B."/>
            <person name="Ding K."/>
            <person name="Chen S."/>
            <person name="Cheng H."/>
            <person name="Yao Z."/>
            <person name="He B."/>
            <person name="Chen R."/>
            <person name="Ma D."/>
            <person name="Qiang B."/>
            <person name="Wen Y."/>
            <person name="Hou Y."/>
            <person name="Yu J."/>
        </authorList>
    </citation>
    <scope>NUCLEOTIDE SEQUENCE [LARGE SCALE GENOMIC DNA]</scope>
    <source>
        <strain>301 / Serotype 2a</strain>
    </source>
</reference>
<reference key="2">
    <citation type="journal article" date="2003" name="Infect. Immun.">
        <title>Complete genome sequence and comparative genomics of Shigella flexneri serotype 2a strain 2457T.</title>
        <authorList>
            <person name="Wei J."/>
            <person name="Goldberg M.B."/>
            <person name="Burland V."/>
            <person name="Venkatesan M.M."/>
            <person name="Deng W."/>
            <person name="Fournier G."/>
            <person name="Mayhew G.F."/>
            <person name="Plunkett G. III"/>
            <person name="Rose D.J."/>
            <person name="Darling A."/>
            <person name="Mau B."/>
            <person name="Perna N.T."/>
            <person name="Payne S.M."/>
            <person name="Runyen-Janecky L.J."/>
            <person name="Zhou S."/>
            <person name="Schwartz D.C."/>
            <person name="Blattner F.R."/>
        </authorList>
    </citation>
    <scope>NUCLEOTIDE SEQUENCE [LARGE SCALE GENOMIC DNA]</scope>
    <source>
        <strain>ATCC 700930 / 2457T / Serotype 2a</strain>
    </source>
</reference>
<evidence type="ECO:0000255" key="1">
    <source>
        <dbReference type="HAMAP-Rule" id="MF_00097"/>
    </source>
</evidence>
<proteinExistence type="inferred from homology"/>
<accession>Q83PB9</accession>
<accession>Q7UBA1</accession>
<protein>
    <recommendedName>
        <fullName evidence="1">Thiamine-phosphate synthase</fullName>
        <shortName evidence="1">TP synthase</shortName>
        <shortName evidence="1">TPS</shortName>
        <ecNumber evidence="1">2.5.1.3</ecNumber>
    </recommendedName>
    <alternativeName>
        <fullName evidence="1">Thiamine-phosphate pyrophosphorylase</fullName>
        <shortName evidence="1">TMP pyrophosphorylase</shortName>
        <shortName evidence="1">TMP-PPase</shortName>
    </alternativeName>
</protein>
<feature type="chain" id="PRO_0000157041" description="Thiamine-phosphate synthase">
    <location>
        <begin position="1"/>
        <end position="211"/>
    </location>
</feature>
<feature type="binding site" evidence="1">
    <location>
        <begin position="37"/>
        <end position="41"/>
    </location>
    <ligand>
        <name>4-amino-2-methyl-5-(diphosphooxymethyl)pyrimidine</name>
        <dbReference type="ChEBI" id="CHEBI:57841"/>
    </ligand>
</feature>
<feature type="binding site" evidence="1">
    <location>
        <position position="69"/>
    </location>
    <ligand>
        <name>4-amino-2-methyl-5-(diphosphooxymethyl)pyrimidine</name>
        <dbReference type="ChEBI" id="CHEBI:57841"/>
    </ligand>
</feature>
<feature type="binding site" evidence="1">
    <location>
        <position position="70"/>
    </location>
    <ligand>
        <name>Mg(2+)</name>
        <dbReference type="ChEBI" id="CHEBI:18420"/>
    </ligand>
</feature>
<feature type="binding site" evidence="1">
    <location>
        <position position="89"/>
    </location>
    <ligand>
        <name>Mg(2+)</name>
        <dbReference type="ChEBI" id="CHEBI:18420"/>
    </ligand>
</feature>
<feature type="binding site" evidence="1">
    <location>
        <position position="108"/>
    </location>
    <ligand>
        <name>4-amino-2-methyl-5-(diphosphooxymethyl)pyrimidine</name>
        <dbReference type="ChEBI" id="CHEBI:57841"/>
    </ligand>
</feature>
<feature type="binding site" evidence="1">
    <location>
        <begin position="134"/>
        <end position="136"/>
    </location>
    <ligand>
        <name>2-[(2R,5Z)-2-carboxy-4-methylthiazol-5(2H)-ylidene]ethyl phosphate</name>
        <dbReference type="ChEBI" id="CHEBI:62899"/>
    </ligand>
</feature>
<feature type="binding site" evidence="1">
    <location>
        <position position="137"/>
    </location>
    <ligand>
        <name>4-amino-2-methyl-5-(diphosphooxymethyl)pyrimidine</name>
        <dbReference type="ChEBI" id="CHEBI:57841"/>
    </ligand>
</feature>
<feature type="binding site" evidence="1">
    <location>
        <position position="166"/>
    </location>
    <ligand>
        <name>2-[(2R,5Z)-2-carboxy-4-methylthiazol-5(2H)-ylidene]ethyl phosphate</name>
        <dbReference type="ChEBI" id="CHEBI:62899"/>
    </ligand>
</feature>
<feature type="binding site" evidence="1">
    <location>
        <begin position="186"/>
        <end position="187"/>
    </location>
    <ligand>
        <name>2-[(2R,5Z)-2-carboxy-4-methylthiazol-5(2H)-ylidene]ethyl phosphate</name>
        <dbReference type="ChEBI" id="CHEBI:62899"/>
    </ligand>
</feature>
<organism>
    <name type="scientific">Shigella flexneri</name>
    <dbReference type="NCBI Taxonomy" id="623"/>
    <lineage>
        <taxon>Bacteria</taxon>
        <taxon>Pseudomonadati</taxon>
        <taxon>Pseudomonadota</taxon>
        <taxon>Gammaproteobacteria</taxon>
        <taxon>Enterobacterales</taxon>
        <taxon>Enterobacteriaceae</taxon>
        <taxon>Shigella</taxon>
    </lineage>
</organism>
<gene>
    <name evidence="1" type="primary">thiE</name>
    <name type="ordered locus">SF4065</name>
    <name type="ordered locus">S3670</name>
</gene>
<name>THIE_SHIFL</name>
<sequence length="211" mass="23041">MYQPDFPPVPFRLGLYPVVDSVQWIERLLDAGVRTLQLRIKDRRDEEVEADVVAAIALGRRYNARLFINDYWRLAIKHQAYGVHLGQEDLQATDLNAIRAAGLRLGVSTHDDMEIDVALAARPSYIALGHVFPTQTKQMPSAPQGLEQLARHVERLADYPTVAIGGISLARAPAVIATGVGSIAVVSAITQAADWRLATAQLLEIAGVGDE</sequence>